<feature type="chain" id="PRO_1000125200" description="Sec-independent protein translocase protein TatA">
    <location>
        <begin position="1"/>
        <end position="76"/>
    </location>
</feature>
<feature type="transmembrane region" description="Helical" evidence="1">
    <location>
        <begin position="1"/>
        <end position="21"/>
    </location>
</feature>
<feature type="region of interest" description="Disordered" evidence="2">
    <location>
        <begin position="40"/>
        <end position="76"/>
    </location>
</feature>
<feature type="compositionally biased region" description="Basic and acidic residues" evidence="2">
    <location>
        <begin position="64"/>
        <end position="76"/>
    </location>
</feature>
<protein>
    <recommendedName>
        <fullName evidence="1">Sec-independent protein translocase protein TatA</fullName>
    </recommendedName>
</protein>
<comment type="function">
    <text evidence="1">Part of the twin-arginine translocation (Tat) system that transports large folded proteins containing a characteristic twin-arginine motif in their signal peptide across membranes. TatA could form the protein-conducting channel of the Tat system.</text>
</comment>
<comment type="subunit">
    <text evidence="1">The Tat system comprises two distinct complexes: a TatABC complex, containing multiple copies of TatA, TatB and TatC subunits, and a separate TatA complex, containing only TatA subunits. Substrates initially bind to the TatABC complex, which probably triggers association of the separate TatA complex to form the active translocon.</text>
</comment>
<comment type="subcellular location">
    <subcellularLocation>
        <location evidence="1">Cell inner membrane</location>
        <topology evidence="1">Single-pass membrane protein</topology>
    </subcellularLocation>
</comment>
<comment type="similarity">
    <text evidence="1">Belongs to the TatA/E family.</text>
</comment>
<proteinExistence type="inferred from homology"/>
<organism>
    <name type="scientific">Burkholderia orbicola (strain MC0-3)</name>
    <dbReference type="NCBI Taxonomy" id="406425"/>
    <lineage>
        <taxon>Bacteria</taxon>
        <taxon>Pseudomonadati</taxon>
        <taxon>Pseudomonadota</taxon>
        <taxon>Betaproteobacteria</taxon>
        <taxon>Burkholderiales</taxon>
        <taxon>Burkholderiaceae</taxon>
        <taxon>Burkholderia</taxon>
        <taxon>Burkholderia cepacia complex</taxon>
        <taxon>Burkholderia orbicola</taxon>
    </lineage>
</organism>
<accession>B1JUB0</accession>
<gene>
    <name evidence="1" type="primary">tatA</name>
    <name type="ordered locus">Bcenmc03_0415</name>
</gene>
<dbReference type="EMBL" id="CP000958">
    <property type="protein sequence ID" value="ACA89595.1"/>
    <property type="molecule type" value="Genomic_DNA"/>
</dbReference>
<dbReference type="RefSeq" id="WP_006477115.1">
    <property type="nucleotide sequence ID" value="NC_010508.1"/>
</dbReference>
<dbReference type="SMR" id="B1JUB0"/>
<dbReference type="GeneID" id="83047218"/>
<dbReference type="KEGG" id="bcm:Bcenmc03_0415"/>
<dbReference type="HOGENOM" id="CLU_086034_5_3_4"/>
<dbReference type="Proteomes" id="UP000002169">
    <property type="component" value="Chromosome 1"/>
</dbReference>
<dbReference type="GO" id="GO:0033281">
    <property type="term" value="C:TAT protein transport complex"/>
    <property type="evidence" value="ECO:0007669"/>
    <property type="project" value="UniProtKB-UniRule"/>
</dbReference>
<dbReference type="GO" id="GO:0008320">
    <property type="term" value="F:protein transmembrane transporter activity"/>
    <property type="evidence" value="ECO:0007669"/>
    <property type="project" value="UniProtKB-UniRule"/>
</dbReference>
<dbReference type="GO" id="GO:0043953">
    <property type="term" value="P:protein transport by the Tat complex"/>
    <property type="evidence" value="ECO:0007669"/>
    <property type="project" value="UniProtKB-UniRule"/>
</dbReference>
<dbReference type="Gene3D" id="1.20.5.3310">
    <property type="match status" value="1"/>
</dbReference>
<dbReference type="HAMAP" id="MF_00236">
    <property type="entry name" value="TatA_E"/>
    <property type="match status" value="1"/>
</dbReference>
<dbReference type="InterPro" id="IPR003369">
    <property type="entry name" value="TatA/B/E"/>
</dbReference>
<dbReference type="InterPro" id="IPR006312">
    <property type="entry name" value="TatA/E"/>
</dbReference>
<dbReference type="NCBIfam" id="NF002813">
    <property type="entry name" value="PRK02958.1"/>
    <property type="match status" value="1"/>
</dbReference>
<dbReference type="NCBIfam" id="TIGR01411">
    <property type="entry name" value="tatAE"/>
    <property type="match status" value="1"/>
</dbReference>
<dbReference type="PANTHER" id="PTHR42982">
    <property type="entry name" value="SEC-INDEPENDENT PROTEIN TRANSLOCASE PROTEIN TATA"/>
    <property type="match status" value="1"/>
</dbReference>
<dbReference type="PANTHER" id="PTHR42982:SF1">
    <property type="entry name" value="SEC-INDEPENDENT PROTEIN TRANSLOCASE PROTEIN TATA"/>
    <property type="match status" value="1"/>
</dbReference>
<dbReference type="Pfam" id="PF02416">
    <property type="entry name" value="TatA_B_E"/>
    <property type="match status" value="1"/>
</dbReference>
<sequence>MGGLSIWHWLIVLLIVALVFGTKKLRNIGNDLGSAVKGFKDGMKEGETPADAQQLPRSGAVDVNAKETTRSDSNKA</sequence>
<reference key="1">
    <citation type="submission" date="2008-02" db="EMBL/GenBank/DDBJ databases">
        <title>Complete sequence of chromosome 1 of Burkholderia cenocepacia MC0-3.</title>
        <authorList>
            <person name="Copeland A."/>
            <person name="Lucas S."/>
            <person name="Lapidus A."/>
            <person name="Barry K."/>
            <person name="Bruce D."/>
            <person name="Goodwin L."/>
            <person name="Glavina del Rio T."/>
            <person name="Dalin E."/>
            <person name="Tice H."/>
            <person name="Pitluck S."/>
            <person name="Chain P."/>
            <person name="Malfatti S."/>
            <person name="Shin M."/>
            <person name="Vergez L."/>
            <person name="Schmutz J."/>
            <person name="Larimer F."/>
            <person name="Land M."/>
            <person name="Hauser L."/>
            <person name="Kyrpides N."/>
            <person name="Mikhailova N."/>
            <person name="Tiedje J."/>
            <person name="Richardson P."/>
        </authorList>
    </citation>
    <scope>NUCLEOTIDE SEQUENCE [LARGE SCALE GENOMIC DNA]</scope>
    <source>
        <strain>MC0-3</strain>
    </source>
</reference>
<name>TATA_BURO0</name>
<keyword id="KW-0997">Cell inner membrane</keyword>
<keyword id="KW-1003">Cell membrane</keyword>
<keyword id="KW-0472">Membrane</keyword>
<keyword id="KW-0653">Protein transport</keyword>
<keyword id="KW-0811">Translocation</keyword>
<keyword id="KW-0812">Transmembrane</keyword>
<keyword id="KW-1133">Transmembrane helix</keyword>
<keyword id="KW-0813">Transport</keyword>
<evidence type="ECO:0000255" key="1">
    <source>
        <dbReference type="HAMAP-Rule" id="MF_00236"/>
    </source>
</evidence>
<evidence type="ECO:0000256" key="2">
    <source>
        <dbReference type="SAM" id="MobiDB-lite"/>
    </source>
</evidence>